<keyword id="KW-0148">Chlorophyll</keyword>
<keyword id="KW-0150">Chloroplast</keyword>
<keyword id="KW-0157">Chromophore</keyword>
<keyword id="KW-0249">Electron transport</keyword>
<keyword id="KW-0408">Iron</keyword>
<keyword id="KW-0460">Magnesium</keyword>
<keyword id="KW-0472">Membrane</keyword>
<keyword id="KW-0479">Metal-binding</keyword>
<keyword id="KW-0560">Oxidoreductase</keyword>
<keyword id="KW-0602">Photosynthesis</keyword>
<keyword id="KW-0604">Photosystem II</keyword>
<keyword id="KW-0934">Plastid</keyword>
<keyword id="KW-0793">Thylakoid</keyword>
<keyword id="KW-0812">Transmembrane</keyword>
<keyword id="KW-1133">Transmembrane helix</keyword>
<keyword id="KW-0813">Transport</keyword>
<sequence>MTIAIERNIQRGLFDLVDDWLKRDRFVFIGWSGLLLFPCSYLALGAWFTGTTFVTSWYTHGLASSYLEGCNFLTAAVSSPANSMGHSLLFLWGPEAQGDFTRWCQIGGLWTFTALHGAFGLIGFCLRQFEIARLVGIRPYNAIAFSGPIAVFVSVFLIYPLGQASWFFAPSFGVAAIFRFILFLQGFHNWTLNPFHMMGVAGILGGALLCAIHGATVENTLFEDGEAANTFRAFTPTQSEETYSMVTANRFWSQIFGVAFSNKRWLHFFMLFVPVTGLWTSSIGIIGLALNLRAYDFVSQELRAAEDPEFETFYTKNLLLNEGIRAWMATQDQPHENFVFPEEVLPRGNAL</sequence>
<accession>P28253</accession>
<feature type="chain" id="PRO_0000090504" description="Photosystem II D2 protein">
    <location>
        <begin position="1"/>
        <end position="351"/>
    </location>
</feature>
<feature type="transmembrane region" description="Helical" evidence="1">
    <location>
        <begin position="39"/>
        <end position="59"/>
    </location>
</feature>
<feature type="transmembrane region" description="Helical" evidence="1">
    <location>
        <begin position="123"/>
        <end position="139"/>
    </location>
</feature>
<feature type="transmembrane region" description="Helical" evidence="1">
    <location>
        <begin position="151"/>
        <end position="164"/>
    </location>
</feature>
<feature type="transmembrane region" description="Helical" evidence="1">
    <location>
        <begin position="206"/>
        <end position="226"/>
    </location>
</feature>
<feature type="transmembrane region" description="Helical" evidence="1">
    <location>
        <begin position="277"/>
        <end position="293"/>
    </location>
</feature>
<feature type="binding site" description="axial binding residue" evidence="1">
    <location>
        <position position="116"/>
    </location>
    <ligand>
        <name>chlorophyll a</name>
        <dbReference type="ChEBI" id="CHEBI:58416"/>
        <label>ChlzD2</label>
    </ligand>
    <ligandPart>
        <name>Mg</name>
        <dbReference type="ChEBI" id="CHEBI:25107"/>
    </ligandPart>
</feature>
<feature type="binding site" evidence="1">
    <location>
        <position position="128"/>
    </location>
    <ligand>
        <name>pheophytin a</name>
        <dbReference type="ChEBI" id="CHEBI:136840"/>
        <label>D2</label>
    </ligand>
</feature>
<feature type="binding site" evidence="1">
    <location>
        <position position="141"/>
    </location>
    <ligand>
        <name>pheophytin a</name>
        <dbReference type="ChEBI" id="CHEBI:136840"/>
        <label>D2</label>
    </ligand>
</feature>
<feature type="binding site" description="axial binding residue" evidence="1">
    <location>
        <position position="196"/>
    </location>
    <ligand>
        <name>chlorophyll a</name>
        <dbReference type="ChEBI" id="CHEBI:58416"/>
        <label>PD2</label>
    </ligand>
    <ligandPart>
        <name>Mg</name>
        <dbReference type="ChEBI" id="CHEBI:25107"/>
    </ligandPart>
</feature>
<feature type="binding site" evidence="1">
    <location>
        <position position="213"/>
    </location>
    <ligand>
        <name>a plastoquinone</name>
        <dbReference type="ChEBI" id="CHEBI:17757"/>
        <label>Q(A)</label>
    </ligand>
</feature>
<feature type="binding site" evidence="1">
    <location>
        <position position="213"/>
    </location>
    <ligand>
        <name>Fe cation</name>
        <dbReference type="ChEBI" id="CHEBI:24875"/>
        <note>ligand shared with heterodimeric partner</note>
    </ligand>
</feature>
<feature type="binding site" evidence="1">
    <location>
        <position position="260"/>
    </location>
    <ligand>
        <name>a plastoquinone</name>
        <dbReference type="ChEBI" id="CHEBI:17757"/>
        <label>Q(A)</label>
    </ligand>
</feature>
<feature type="binding site" evidence="1">
    <location>
        <position position="267"/>
    </location>
    <ligand>
        <name>Fe cation</name>
        <dbReference type="ChEBI" id="CHEBI:24875"/>
        <note>ligand shared with heterodimeric partner</note>
    </ligand>
</feature>
<protein>
    <recommendedName>
        <fullName evidence="1">Photosystem II D2 protein</fullName>
        <shortName evidence="1">PSII D2 protein</shortName>
        <ecNumber evidence="1">1.10.3.9</ecNumber>
    </recommendedName>
    <alternativeName>
        <fullName evidence="1">Photosystem Q(A) protein</fullName>
    </alternativeName>
</protein>
<gene>
    <name evidence="1" type="primary">psbD</name>
</gene>
<comment type="function">
    <text evidence="1">Photosystem II (PSII) is a light-driven water:plastoquinone oxidoreductase that uses light energy to abstract electrons from H(2)O, generating O(2) and a proton gradient subsequently used for ATP formation. It consists of a core antenna complex that captures photons, and an electron transfer chain that converts photonic excitation into a charge separation. The D1/D2 (PsbA/PsbD) reaction center heterodimer binds P680, the primary electron donor of PSII as well as several subsequent electron acceptors. D2 is needed for assembly of a stable PSII complex.</text>
</comment>
<comment type="catalytic activity">
    <reaction evidence="1">
        <text>2 a plastoquinone + 4 hnu + 2 H2O = 2 a plastoquinol + O2</text>
        <dbReference type="Rhea" id="RHEA:36359"/>
        <dbReference type="Rhea" id="RHEA-COMP:9561"/>
        <dbReference type="Rhea" id="RHEA-COMP:9562"/>
        <dbReference type="ChEBI" id="CHEBI:15377"/>
        <dbReference type="ChEBI" id="CHEBI:15379"/>
        <dbReference type="ChEBI" id="CHEBI:17757"/>
        <dbReference type="ChEBI" id="CHEBI:30212"/>
        <dbReference type="ChEBI" id="CHEBI:62192"/>
        <dbReference type="EC" id="1.10.3.9"/>
    </reaction>
</comment>
<comment type="cofactor">
    <text evidence="1">The D1/D2 heterodimer binds P680, chlorophylls that are the primary electron donor of PSII, and subsequent electron acceptors. It shares a non-heme iron and each subunit binds pheophytin, quinone, additional chlorophylls, carotenoids and lipids. There is also a Cl(-1) ion associated with D1 and D2, which is required for oxygen evolution. The PSII complex binds additional chlorophylls, carotenoids and specific lipids.</text>
</comment>
<comment type="subunit">
    <text evidence="2">PSII is composed of 1 copy each of membrane proteins PsbA, PsbB, PsbC, PsbD, PsbE, PsbF, PsbH, PsbI, PsbJ, PsbK, PsbL, PsbM, PsbT, PsbY, PsbZ, Psb30/Ycf12, at least 3 peripheral proteins of the oxygen-evolving complex and a large number of cofactors. It forms dimeric complexes.</text>
</comment>
<comment type="subcellular location">
    <subcellularLocation>
        <location evidence="1">Plastid</location>
        <location evidence="1">Chloroplast thylakoid membrane</location>
        <topology evidence="1">Multi-pass membrane protein</topology>
    </subcellularLocation>
</comment>
<comment type="miscellaneous">
    <text evidence="1">2 of the reaction center chlorophylls (ChlD1 and ChlD2) are entirely coordinated by water.</text>
</comment>
<comment type="miscellaneous">
    <text evidence="2">Although originally identified as Cyanidium caldarium, these sequences derive from Galdieria sulphuraria.</text>
</comment>
<comment type="similarity">
    <text evidence="1">Belongs to the reaction center PufL/M/PsbA/D family.</text>
</comment>
<organism>
    <name type="scientific">Galdieria sulphuraria</name>
    <name type="common">Red alga</name>
    <dbReference type="NCBI Taxonomy" id="130081"/>
    <lineage>
        <taxon>Eukaryota</taxon>
        <taxon>Rhodophyta</taxon>
        <taxon>Bangiophyceae</taxon>
        <taxon>Galdieriales</taxon>
        <taxon>Galdieriaceae</taxon>
        <taxon>Galdieria</taxon>
    </lineage>
</organism>
<name>PSBD_GALSU</name>
<evidence type="ECO:0000255" key="1">
    <source>
        <dbReference type="HAMAP-Rule" id="MF_01383"/>
    </source>
</evidence>
<evidence type="ECO:0000305" key="2"/>
<geneLocation type="chloroplast"/>
<reference key="1">
    <citation type="journal article" date="1992" name="Plant Mol. Biol.">
        <title>An equivalent to bacterial ompR genes is encoded on the plastid genome of red algae.</title>
        <authorList>
            <person name="Kessler U."/>
            <person name="Maid U."/>
            <person name="Zetsche K."/>
        </authorList>
    </citation>
    <scope>NUCLEOTIDE SEQUENCE [GENOMIC DNA]</scope>
    <source>
        <strain>14-1-1 / Isolate 107.79/Goettingen</strain>
    </source>
</reference>
<reference key="2">
    <citation type="journal article" date="1992" name="Plant Mol. Biol.">
        <title>A 16 kb small single-copy region separates the plastid DNA inverted repeat of the unicellular red alga Cyanidium caldarium: physical mapping of the IR-flanking regions and nucleotide sequences of the psbD, psbC, rps16, 5S rRNA and rpl21 genes.</title>
        <authorList>
            <person name="Maid U."/>
            <person name="Zetsche K."/>
        </authorList>
    </citation>
    <scope>NUCLEOTIDE SEQUENCE [GENOMIC DNA]</scope>
    <source>
        <strain>14-1-1 / Isolate 107.79/Goettingen</strain>
    </source>
</reference>
<dbReference type="EC" id="1.10.3.9" evidence="1"/>
<dbReference type="EMBL" id="X62578">
    <property type="protein sequence ID" value="CAA44459.1"/>
    <property type="molecule type" value="Genomic_DNA"/>
</dbReference>
<dbReference type="SMR" id="P28253"/>
<dbReference type="GO" id="GO:0009535">
    <property type="term" value="C:chloroplast thylakoid membrane"/>
    <property type="evidence" value="ECO:0007669"/>
    <property type="project" value="UniProtKB-SubCell"/>
</dbReference>
<dbReference type="GO" id="GO:0009523">
    <property type="term" value="C:photosystem II"/>
    <property type="evidence" value="ECO:0007669"/>
    <property type="project" value="UniProtKB-KW"/>
</dbReference>
<dbReference type="GO" id="GO:0016168">
    <property type="term" value="F:chlorophyll binding"/>
    <property type="evidence" value="ECO:0007669"/>
    <property type="project" value="UniProtKB-UniRule"/>
</dbReference>
<dbReference type="GO" id="GO:0045156">
    <property type="term" value="F:electron transporter, transferring electrons within the cyclic electron transport pathway of photosynthesis activity"/>
    <property type="evidence" value="ECO:0007669"/>
    <property type="project" value="InterPro"/>
</dbReference>
<dbReference type="GO" id="GO:0005506">
    <property type="term" value="F:iron ion binding"/>
    <property type="evidence" value="ECO:0007669"/>
    <property type="project" value="UniProtKB-UniRule"/>
</dbReference>
<dbReference type="GO" id="GO:0016491">
    <property type="term" value="F:oxidoreductase activity"/>
    <property type="evidence" value="ECO:0007669"/>
    <property type="project" value="UniProtKB-KW"/>
</dbReference>
<dbReference type="GO" id="GO:0009772">
    <property type="term" value="P:photosynthetic electron transport in photosystem II"/>
    <property type="evidence" value="ECO:0007669"/>
    <property type="project" value="InterPro"/>
</dbReference>
<dbReference type="CDD" id="cd09288">
    <property type="entry name" value="Photosystem-II_D2"/>
    <property type="match status" value="1"/>
</dbReference>
<dbReference type="FunFam" id="1.20.85.10:FF:000001">
    <property type="entry name" value="photosystem II D2 protein-like"/>
    <property type="match status" value="1"/>
</dbReference>
<dbReference type="Gene3D" id="1.20.85.10">
    <property type="entry name" value="Photosystem II protein D1-like"/>
    <property type="match status" value="1"/>
</dbReference>
<dbReference type="HAMAP" id="MF_01383">
    <property type="entry name" value="PSII_PsbD_D2"/>
    <property type="match status" value="1"/>
</dbReference>
<dbReference type="InterPro" id="IPR055266">
    <property type="entry name" value="D1/D2"/>
</dbReference>
<dbReference type="InterPro" id="IPR036854">
    <property type="entry name" value="Photo_II_D1/D2_sf"/>
</dbReference>
<dbReference type="InterPro" id="IPR000484">
    <property type="entry name" value="Photo_RC_L/M"/>
</dbReference>
<dbReference type="InterPro" id="IPR055265">
    <property type="entry name" value="Photo_RC_L/M_CS"/>
</dbReference>
<dbReference type="InterPro" id="IPR005868">
    <property type="entry name" value="PSII_PsbD/D2"/>
</dbReference>
<dbReference type="NCBIfam" id="TIGR01152">
    <property type="entry name" value="psbD"/>
    <property type="match status" value="1"/>
</dbReference>
<dbReference type="PANTHER" id="PTHR33149:SF12">
    <property type="entry name" value="PHOTOSYSTEM II D2 PROTEIN"/>
    <property type="match status" value="1"/>
</dbReference>
<dbReference type="PANTHER" id="PTHR33149">
    <property type="entry name" value="PHOTOSYSTEM II PROTEIN D1"/>
    <property type="match status" value="1"/>
</dbReference>
<dbReference type="Pfam" id="PF00124">
    <property type="entry name" value="Photo_RC"/>
    <property type="match status" value="1"/>
</dbReference>
<dbReference type="PRINTS" id="PR00256">
    <property type="entry name" value="REACTNCENTRE"/>
</dbReference>
<dbReference type="SUPFAM" id="SSF81483">
    <property type="entry name" value="Bacterial photosystem II reaction centre, L and M subunits"/>
    <property type="match status" value="1"/>
</dbReference>
<dbReference type="PROSITE" id="PS00244">
    <property type="entry name" value="REACTION_CENTER"/>
    <property type="match status" value="1"/>
</dbReference>
<proteinExistence type="inferred from homology"/>